<keyword id="KW-0150">Chloroplast</keyword>
<keyword id="KW-0903">Direct protein sequencing</keyword>
<keyword id="KW-0413">Isomerase</keyword>
<keyword id="KW-0934">Plastid</keyword>
<keyword id="KW-0697">Rotamase</keyword>
<keyword id="KW-0793">Thylakoid</keyword>
<proteinExistence type="evidence at protein level"/>
<feature type="chain" id="PRO_0000075349" description="FKBP-type peptidyl-prolyl cis-trans isomerase, chloroplastic">
    <location>
        <begin position="1"/>
        <end position="45" status="greater than"/>
    </location>
</feature>
<feature type="non-terminal residue">
    <location>
        <position position="45"/>
    </location>
</feature>
<name>FKBP3_VICFA</name>
<evidence type="ECO:0000250" key="1"/>
<evidence type="ECO:0000269" key="2">
    <source>
    </source>
</evidence>
<evidence type="ECO:0000305" key="3"/>
<protein>
    <recommendedName>
        <fullName>FKBP-type peptidyl-prolyl cis-trans isomerase, chloroplastic</fullName>
        <ecNumber>5.2.1.8</ecNumber>
    </recommendedName>
    <alternativeName>
        <fullName>PPIase</fullName>
    </alternativeName>
    <alternativeName>
        <fullName>Rotamase</fullName>
    </alternativeName>
    <alternativeName>
        <fullName>VfFKBP13</fullName>
    </alternativeName>
</protein>
<sequence length="45" mass="4625">AAEVAPCELTVAPSGLSFCDKVVGTGPQAVKGQLIKAHYVGRLEN</sequence>
<dbReference type="EC" id="5.2.1.8"/>
<dbReference type="SMR" id="P59724"/>
<dbReference type="GO" id="GO:0009543">
    <property type="term" value="C:chloroplast thylakoid lumen"/>
    <property type="evidence" value="ECO:0007669"/>
    <property type="project" value="UniProtKB-SubCell"/>
</dbReference>
<dbReference type="GO" id="GO:0003755">
    <property type="term" value="F:peptidyl-prolyl cis-trans isomerase activity"/>
    <property type="evidence" value="ECO:0007669"/>
    <property type="project" value="UniProtKB-KW"/>
</dbReference>
<dbReference type="Gene3D" id="3.10.50.40">
    <property type="match status" value="1"/>
</dbReference>
<dbReference type="InterPro" id="IPR044183">
    <property type="entry name" value="PNSL4/FKBP13-like"/>
</dbReference>
<dbReference type="InterPro" id="IPR046357">
    <property type="entry name" value="PPIase_dom_sf"/>
</dbReference>
<dbReference type="PANTHER" id="PTHR47833:SF2">
    <property type="entry name" value="PEPTIDYLPROLYL ISOMERASE"/>
    <property type="match status" value="1"/>
</dbReference>
<dbReference type="PANTHER" id="PTHR47833">
    <property type="entry name" value="PHOTOSYNTHETIC NDH SUBUNIT OF LUMENAL LOCATION 4, CHLOROPLASTIC"/>
    <property type="match status" value="1"/>
</dbReference>
<dbReference type="SUPFAM" id="SSF54534">
    <property type="entry name" value="FKBP-like"/>
    <property type="match status" value="1"/>
</dbReference>
<accession>P59724</accession>
<comment type="function">
    <text evidence="1">PPIases accelerate the folding of proteins. It catalyzes the cis-trans isomerization of proline imidic peptide bonds in oligopeptides (By similarity).</text>
</comment>
<comment type="catalytic activity">
    <reaction>
        <text>[protein]-peptidylproline (omega=180) = [protein]-peptidylproline (omega=0)</text>
        <dbReference type="Rhea" id="RHEA:16237"/>
        <dbReference type="Rhea" id="RHEA-COMP:10747"/>
        <dbReference type="Rhea" id="RHEA-COMP:10748"/>
        <dbReference type="ChEBI" id="CHEBI:83833"/>
        <dbReference type="ChEBI" id="CHEBI:83834"/>
        <dbReference type="EC" id="5.2.1.8"/>
    </reaction>
</comment>
<comment type="subcellular location">
    <subcellularLocation>
        <location evidence="2">Plastid</location>
        <location evidence="2">Chloroplast thylakoid lumen</location>
    </subcellularLocation>
</comment>
<comment type="tissue specificity">
    <text evidence="2">Expressed in leaves, but not in roots.</text>
</comment>
<comment type="developmental stage">
    <text evidence="2">Not expressed in etiolated leaves.</text>
</comment>
<comment type="similarity">
    <text evidence="3">Belongs to the FKBP-type PPIase family.</text>
</comment>
<organism>
    <name type="scientific">Vicia faba</name>
    <name type="common">Broad bean</name>
    <name type="synonym">Faba vulgaris</name>
    <dbReference type="NCBI Taxonomy" id="3906"/>
    <lineage>
        <taxon>Eukaryota</taxon>
        <taxon>Viridiplantae</taxon>
        <taxon>Streptophyta</taxon>
        <taxon>Embryophyta</taxon>
        <taxon>Tracheophyta</taxon>
        <taxon>Spermatophyta</taxon>
        <taxon>Magnoliopsida</taxon>
        <taxon>eudicotyledons</taxon>
        <taxon>Gunneridae</taxon>
        <taxon>Pentapetalae</taxon>
        <taxon>rosids</taxon>
        <taxon>fabids</taxon>
        <taxon>Fabales</taxon>
        <taxon>Fabaceae</taxon>
        <taxon>Papilionoideae</taxon>
        <taxon>50 kb inversion clade</taxon>
        <taxon>NPAAA clade</taxon>
        <taxon>Hologalegina</taxon>
        <taxon>IRL clade</taxon>
        <taxon>Fabeae</taxon>
        <taxon>Vicia</taxon>
    </lineage>
</organism>
<reference key="1">
    <citation type="journal article" date="2002" name="Proc. Natl. Acad. Sci. U.S.A.">
        <title>A chloroplast FKBP interacts with and affects the accumulation of Rieske subunit of cytochrome bf complex.</title>
        <authorList>
            <person name="Gupta R."/>
            <person name="Mould R.M."/>
            <person name="He Z."/>
            <person name="Luan S."/>
        </authorList>
    </citation>
    <scope>PROTEIN SEQUENCE</scope>
</reference>
<reference key="2">
    <citation type="journal article" date="1994" name="Proc. Natl. Acad. Sci. U.S.A.">
        <title>Light-regulated, tissue-specific immunophilins in a higher plant.</title>
        <authorList>
            <person name="Luan S."/>
            <person name="Albers M.W."/>
            <person name="Schreiber S.L."/>
        </authorList>
    </citation>
    <scope>SUBCELLULAR LOCATION</scope>
    <scope>DEVELOPMENTAL STAGE</scope>
    <scope>TISSUE SPECIFICITY</scope>
</reference>